<accession>P21286</accession>
<proteinExistence type="inferred from homology"/>
<organism>
    <name type="scientific">Autographa californica nuclear polyhedrosis virus</name>
    <name type="common">AcMNPV</name>
    <dbReference type="NCBI Taxonomy" id="46015"/>
    <lineage>
        <taxon>Viruses</taxon>
        <taxon>Viruses incertae sedis</taxon>
        <taxon>Naldaviricetes</taxon>
        <taxon>Lefavirales</taxon>
        <taxon>Baculoviridae</taxon>
        <taxon>Alphabaculovirus</taxon>
        <taxon>Alphabaculovirus aucalifornicae</taxon>
    </lineage>
</organism>
<reference key="1">
    <citation type="journal article" date="1994" name="Virology">
        <title>The complete DNA sequence of Autographa californica nuclear polyhedrosis virus.</title>
        <authorList>
            <person name="Ayres M.D."/>
            <person name="Howard S.C."/>
            <person name="Kuzio J."/>
            <person name="Lopez-Ferber M."/>
            <person name="Possee R.D."/>
        </authorList>
    </citation>
    <scope>NUCLEOTIDE SEQUENCE [LARGE SCALE GENOMIC DNA]</scope>
    <source>
        <strain>C6</strain>
    </source>
</reference>
<reference key="2">
    <citation type="journal article" date="1990" name="Virology">
        <title>Nucleotide sequence and characterization of the 39K gene region of Autographa californica nuclear polyhedrosis virus.</title>
        <authorList>
            <person name="Guarino L.A."/>
            <person name="Smith M.W."/>
        </authorList>
    </citation>
    <scope>NUCLEOTIDE SEQUENCE [GENOMIC DNA]</scope>
</reference>
<evidence type="ECO:0000305" key="1"/>
<organismHost>
    <name type="scientific">Lepidoptera</name>
    <name type="common">butterflies and moths</name>
    <dbReference type="NCBI Taxonomy" id="7088"/>
</organismHost>
<comment type="similarity">
    <text evidence="1">Belongs to the DNA 3' phosphatase family.</text>
</comment>
<comment type="sequence caution" evidence="1">
    <conflict type="frameshift">
        <sequence resource="EMBL-CDS" id="AAA46687"/>
    </conflict>
</comment>
<feature type="chain" id="PRO_0000132972" description="Uncharacterized 20.8 kDa protein in FGF-VUBI intergenic region">
    <location>
        <begin position="1"/>
        <end position="182"/>
    </location>
</feature>
<keyword id="KW-1185">Reference proteome</keyword>
<sequence length="182" mass="20838">MWTLQQPDLYAYAVHDGAKRTKIAAFDLDGTLISSKTRSKFPKNPDDWQLLPCAHKLKRLYELGYDLVVFTNQAHLGSGKIKASDLLYKLENIKKATGVPISFYVSPNKDEHRKPDTGMWREMAKQFTHIDKEQSFYVGDAAGRINLTTGQKDFSDSDRVFAKNLSLQFYTPEQFIQLDLDL</sequence>
<dbReference type="EMBL" id="L22858">
    <property type="protein sequence ID" value="AAA66663.1"/>
    <property type="molecule type" value="Genomic_DNA"/>
</dbReference>
<dbReference type="EMBL" id="M37122">
    <property type="protein sequence ID" value="AAA46687.1"/>
    <property type="status" value="ALT_FRAME"/>
    <property type="molecule type" value="Genomic_DNA"/>
</dbReference>
<dbReference type="PIR" id="A72854">
    <property type="entry name" value="A72854"/>
</dbReference>
<dbReference type="PIR" id="G45355">
    <property type="entry name" value="G45355"/>
</dbReference>
<dbReference type="RefSeq" id="NP_054062.1">
    <property type="nucleotide sequence ID" value="NC_001623.1"/>
</dbReference>
<dbReference type="SMR" id="P21286"/>
<dbReference type="GeneID" id="1403865"/>
<dbReference type="KEGG" id="vg:1403865"/>
<dbReference type="OrthoDB" id="17725at10239"/>
<dbReference type="Proteomes" id="UP000008292">
    <property type="component" value="Segment"/>
</dbReference>
<dbReference type="GO" id="GO:0046404">
    <property type="term" value="F:ATP-dependent polydeoxyribonucleotide 5'-hydroxyl-kinase activity"/>
    <property type="evidence" value="ECO:0007669"/>
    <property type="project" value="TreeGrafter"/>
</dbReference>
<dbReference type="GO" id="GO:0003690">
    <property type="term" value="F:double-stranded DNA binding"/>
    <property type="evidence" value="ECO:0007669"/>
    <property type="project" value="TreeGrafter"/>
</dbReference>
<dbReference type="GO" id="GO:0046403">
    <property type="term" value="F:polynucleotide 3'-phosphatase activity"/>
    <property type="evidence" value="ECO:0007669"/>
    <property type="project" value="TreeGrafter"/>
</dbReference>
<dbReference type="GO" id="GO:0006281">
    <property type="term" value="P:DNA repair"/>
    <property type="evidence" value="ECO:0007669"/>
    <property type="project" value="TreeGrafter"/>
</dbReference>
<dbReference type="Gene3D" id="3.40.50.1000">
    <property type="entry name" value="HAD superfamily/HAD-like"/>
    <property type="match status" value="1"/>
</dbReference>
<dbReference type="InterPro" id="IPR036412">
    <property type="entry name" value="HAD-like_sf"/>
</dbReference>
<dbReference type="InterPro" id="IPR006549">
    <property type="entry name" value="HAD-SF_hydro_IIIA"/>
</dbReference>
<dbReference type="InterPro" id="IPR023214">
    <property type="entry name" value="HAD_sf"/>
</dbReference>
<dbReference type="InterPro" id="IPR013954">
    <property type="entry name" value="PNK3P"/>
</dbReference>
<dbReference type="InterPro" id="IPR006551">
    <property type="entry name" value="Polynucleotide_phosphatase"/>
</dbReference>
<dbReference type="NCBIfam" id="TIGR01664">
    <property type="entry name" value="DNA-3'-Pase"/>
    <property type="match status" value="1"/>
</dbReference>
<dbReference type="NCBIfam" id="TIGR01662">
    <property type="entry name" value="HAD-SF-IIIA"/>
    <property type="match status" value="1"/>
</dbReference>
<dbReference type="PANTHER" id="PTHR12083">
    <property type="entry name" value="BIFUNCTIONAL POLYNUCLEOTIDE PHOSPHATASE/KINASE"/>
    <property type="match status" value="1"/>
</dbReference>
<dbReference type="PANTHER" id="PTHR12083:SF9">
    <property type="entry name" value="BIFUNCTIONAL POLYNUCLEOTIDE PHOSPHATASE_KINASE"/>
    <property type="match status" value="1"/>
</dbReference>
<dbReference type="Pfam" id="PF08645">
    <property type="entry name" value="PNK3P"/>
    <property type="match status" value="1"/>
</dbReference>
<dbReference type="SUPFAM" id="SSF56784">
    <property type="entry name" value="HAD-like"/>
    <property type="match status" value="1"/>
</dbReference>
<protein>
    <recommendedName>
        <fullName>Uncharacterized 20.8 kDa protein in FGF-VUBI intergenic region</fullName>
    </recommendedName>
    <alternativeName>
        <fullName>ORF 1</fullName>
    </alternativeName>
</protein>
<name>Y033_NPVAC</name>